<comment type="function">
    <text evidence="1">Plays a role in nuclear translocation of the viral pre-integration complex (PIC), thus is required for the virus to infect non-dividing cells. Targets specific host proteins for degradation by the 26S proteasome. Acts by associating with the cellular CUL4A-DDB1 E3 ligase complex through direct interaction with host VPRPB/DCAF-1. This change in the E3 ligase substrate specificity results in the degradation of host SAMHD1. In turn, SAMHD1 depletion allows viral replication in host myeloid cells by preventing SAMHD1-mediated hydrolysis of intracellular dNTPs necessary for reverse transcription (By similarity).</text>
</comment>
<comment type="subunit">
    <text evidence="1 2 3">Interacts with the P6 region of unprocessed GAG (By similarity). Interacts with host VPRBP/DCAF1, leading to change substrate specificity of the CUL4A-DDB1 E3 ligase complex (By similarity). Interacts with host NUP153 (By similarity).</text>
</comment>
<comment type="subcellular location">
    <subcellularLocation>
        <location>Virion</location>
    </subcellularLocation>
    <subcellularLocation>
        <location>Host nucleus</location>
    </subcellularLocation>
    <text evidence="1">Nuclear just after virion uncoating, or if expressed in the absence of unprocessed GAG.</text>
</comment>
<comment type="similarity">
    <text evidence="5">Belongs to the lentivirus VPX protein family.</text>
</comment>
<gene>
    <name type="primary">vpx</name>
</gene>
<protein>
    <recommendedName>
        <fullName>Protein Vpx</fullName>
    </recommendedName>
    <alternativeName>
        <fullName>Viral protein X</fullName>
    </alternativeName>
    <alternativeName>
        <fullName>X ORF protein</fullName>
    </alternativeName>
</protein>
<reference key="1">
    <citation type="journal article" date="1994" name="Virology">
        <title>HIV-2 EHO isolate has a divergent envelope gene and induces single cell killing by apoptosis.</title>
        <authorList>
            <person name="Rey-Cuille M.A."/>
            <person name="Galabru J."/>
            <person name="Laurent-Crawford A."/>
            <person name="Krust B."/>
            <person name="Montagnier L."/>
            <person name="Hovanessian A.G."/>
        </authorList>
    </citation>
    <scope>NUCLEOTIDE SEQUENCE</scope>
</reference>
<reference key="2">
    <citation type="journal article" date="1995" name="AIDS Res. Hum. Retroviruses">
        <title>Nucleotide sequence of the HIV-2 EHO genome, a divergent HIV-2 isolate.</title>
        <authorList>
            <person name="Galabru J."/>
            <person name="Rey-Cuille M.A."/>
            <person name="Hovanessian A.G."/>
        </authorList>
    </citation>
    <scope>NUCLEOTIDE SEQUENCE</scope>
</reference>
<keyword id="KW-0014">AIDS</keyword>
<keyword id="KW-1048">Host nucleus</keyword>
<keyword id="KW-0945">Host-virus interaction</keyword>
<keyword id="KW-1090">Inhibition of host innate immune response by virus</keyword>
<keyword id="KW-0899">Viral immunoevasion</keyword>
<keyword id="KW-0946">Virion</keyword>
<organism>
    <name type="scientific">Human immunodeficiency virus type 2 subtype B (isolate EHO)</name>
    <name type="common">HIV-2</name>
    <dbReference type="NCBI Taxonomy" id="388821"/>
    <lineage>
        <taxon>Viruses</taxon>
        <taxon>Riboviria</taxon>
        <taxon>Pararnavirae</taxon>
        <taxon>Artverviricota</taxon>
        <taxon>Revtraviricetes</taxon>
        <taxon>Ortervirales</taxon>
        <taxon>Retroviridae</taxon>
        <taxon>Orthoretrovirinae</taxon>
        <taxon>Lentivirus</taxon>
        <taxon>Human immunodeficiency virus 2</taxon>
    </lineage>
</organism>
<name>VPX_HV2EH</name>
<organismHost>
    <name type="scientific">Homo sapiens</name>
    <name type="common">Human</name>
    <dbReference type="NCBI Taxonomy" id="9606"/>
</organismHost>
<sequence length="111" mass="12696">MDPRERVPPGNSGEETVGEAFEWLETTLEHLNRVAVNHLPRELIFQVWQKSWAYWREEQGMSISYTKYRYLCLMQKAMFIHFAKGCGCLREGHGPGGWRSGPPPPPPPGLA</sequence>
<evidence type="ECO:0000250" key="1"/>
<evidence type="ECO:0000250" key="2">
    <source>
        <dbReference type="UniProtKB" id="P12454"/>
    </source>
</evidence>
<evidence type="ECO:0000250" key="3">
    <source>
        <dbReference type="UniProtKB" id="P18099"/>
    </source>
</evidence>
<evidence type="ECO:0000250" key="4">
    <source>
        <dbReference type="UniProtKB" id="P19508"/>
    </source>
</evidence>
<evidence type="ECO:0000305" key="5"/>
<proteinExistence type="inferred from homology"/>
<dbReference type="EMBL" id="U27200">
    <property type="protein sequence ID" value="AAC54469.1"/>
    <property type="molecule type" value="Genomic_DNA"/>
</dbReference>
<dbReference type="SMR" id="Q89721"/>
<dbReference type="Proteomes" id="UP000007423">
    <property type="component" value="Segment"/>
</dbReference>
<dbReference type="GO" id="GO:0042025">
    <property type="term" value="C:host cell nucleus"/>
    <property type="evidence" value="ECO:0007669"/>
    <property type="project" value="UniProtKB-SubCell"/>
</dbReference>
<dbReference type="GO" id="GO:0044423">
    <property type="term" value="C:virion component"/>
    <property type="evidence" value="ECO:0007669"/>
    <property type="project" value="UniProtKB-KW"/>
</dbReference>
<dbReference type="GO" id="GO:0052170">
    <property type="term" value="P:symbiont-mediated suppression of host innate immune response"/>
    <property type="evidence" value="ECO:0007669"/>
    <property type="project" value="UniProtKB-KW"/>
</dbReference>
<dbReference type="GO" id="GO:0019058">
    <property type="term" value="P:viral life cycle"/>
    <property type="evidence" value="ECO:0007669"/>
    <property type="project" value="InterPro"/>
</dbReference>
<dbReference type="Gene3D" id="1.20.5.4730">
    <property type="match status" value="1"/>
</dbReference>
<dbReference type="InterPro" id="IPR053711">
    <property type="entry name" value="Lentiviral_Vpx_assoc_factor"/>
</dbReference>
<dbReference type="InterPro" id="IPR000012">
    <property type="entry name" value="RetroV_VpR/X"/>
</dbReference>
<dbReference type="Pfam" id="PF00522">
    <property type="entry name" value="VPR"/>
    <property type="match status" value="1"/>
</dbReference>
<feature type="chain" id="PRO_0000246771" description="Protein Vpx">
    <location>
        <begin position="1"/>
        <end position="111"/>
    </location>
</feature>
<feature type="region of interest" description="Binds to human NUP153" evidence="4">
    <location>
        <begin position="60"/>
        <end position="79"/>
    </location>
</feature>
<feature type="short sequence motif" description="Nuclear localization signal" evidence="1">
    <location>
        <begin position="64"/>
        <end position="71"/>
    </location>
</feature>
<accession>Q89721</accession>